<comment type="subcellular location">
    <subcellularLocation>
        <location evidence="1">Cytoplasm</location>
    </subcellularLocation>
</comment>
<comment type="similarity">
    <text evidence="1">Belongs to the TACO1 family.</text>
</comment>
<comment type="sequence caution" evidence="2">
    <conflict type="erroneous initiation">
        <sequence resource="EMBL-CDS" id="CAL17251"/>
    </conflict>
</comment>
<gene>
    <name type="ordered locus">ABO_1803</name>
</gene>
<proteinExistence type="inferred from homology"/>
<keyword id="KW-0963">Cytoplasm</keyword>
<keyword id="KW-0238">DNA-binding</keyword>
<keyword id="KW-1185">Reference proteome</keyword>
<keyword id="KW-0804">Transcription</keyword>
<keyword id="KW-0805">Transcription regulation</keyword>
<evidence type="ECO:0000255" key="1">
    <source>
        <dbReference type="HAMAP-Rule" id="MF_00693"/>
    </source>
</evidence>
<evidence type="ECO:0000305" key="2"/>
<reference key="1">
    <citation type="journal article" date="2006" name="Nat. Biotechnol.">
        <title>Genome sequence of the ubiquitous hydrocarbon-degrading marine bacterium Alcanivorax borkumensis.</title>
        <authorList>
            <person name="Schneiker S."/>
            <person name="Martins dos Santos V.A.P."/>
            <person name="Bartels D."/>
            <person name="Bekel T."/>
            <person name="Brecht M."/>
            <person name="Buhrmester J."/>
            <person name="Chernikova T.N."/>
            <person name="Denaro R."/>
            <person name="Ferrer M."/>
            <person name="Gertler C."/>
            <person name="Goesmann A."/>
            <person name="Golyshina O.V."/>
            <person name="Kaminski F."/>
            <person name="Khachane A.N."/>
            <person name="Lang S."/>
            <person name="Linke B."/>
            <person name="McHardy A.C."/>
            <person name="Meyer F."/>
            <person name="Nechitaylo T."/>
            <person name="Puehler A."/>
            <person name="Regenhardt D."/>
            <person name="Rupp O."/>
            <person name="Sabirova J.S."/>
            <person name="Selbitschka W."/>
            <person name="Yakimov M.M."/>
            <person name="Timmis K.N."/>
            <person name="Vorhoelter F.-J."/>
            <person name="Weidner S."/>
            <person name="Kaiser O."/>
            <person name="Golyshin P.N."/>
        </authorList>
    </citation>
    <scope>NUCLEOTIDE SEQUENCE [LARGE SCALE GENOMIC DNA]</scope>
    <source>
        <strain>ATCC 700651 / DSM 11573 / NCIMB 13689 / SK2</strain>
    </source>
</reference>
<organism>
    <name type="scientific">Alcanivorax borkumensis (strain ATCC 700651 / DSM 11573 / NCIMB 13689 / SK2)</name>
    <dbReference type="NCBI Taxonomy" id="393595"/>
    <lineage>
        <taxon>Bacteria</taxon>
        <taxon>Pseudomonadati</taxon>
        <taxon>Pseudomonadota</taxon>
        <taxon>Gammaproteobacteria</taxon>
        <taxon>Oceanospirillales</taxon>
        <taxon>Alcanivoracaceae</taxon>
        <taxon>Alcanivorax</taxon>
    </lineage>
</organism>
<feature type="chain" id="PRO_0000257027" description="Probable transcriptional regulatory protein ABO_1803">
    <location>
        <begin position="1"/>
        <end position="239"/>
    </location>
</feature>
<dbReference type="EMBL" id="AM286690">
    <property type="protein sequence ID" value="CAL17251.1"/>
    <property type="status" value="ALT_INIT"/>
    <property type="molecule type" value="Genomic_DNA"/>
</dbReference>
<dbReference type="RefSeq" id="WP_035461007.1">
    <property type="nucleotide sequence ID" value="NC_008260.1"/>
</dbReference>
<dbReference type="SMR" id="Q0VNJ7"/>
<dbReference type="STRING" id="393595.ABO_1803"/>
<dbReference type="KEGG" id="abo:ABO_1803"/>
<dbReference type="eggNOG" id="COG0217">
    <property type="taxonomic scope" value="Bacteria"/>
</dbReference>
<dbReference type="HOGENOM" id="CLU_062974_2_0_6"/>
<dbReference type="OrthoDB" id="9781053at2"/>
<dbReference type="Proteomes" id="UP000008871">
    <property type="component" value="Chromosome"/>
</dbReference>
<dbReference type="GO" id="GO:0005829">
    <property type="term" value="C:cytosol"/>
    <property type="evidence" value="ECO:0007669"/>
    <property type="project" value="TreeGrafter"/>
</dbReference>
<dbReference type="GO" id="GO:0003677">
    <property type="term" value="F:DNA binding"/>
    <property type="evidence" value="ECO:0007669"/>
    <property type="project" value="UniProtKB-UniRule"/>
</dbReference>
<dbReference type="GO" id="GO:0006355">
    <property type="term" value="P:regulation of DNA-templated transcription"/>
    <property type="evidence" value="ECO:0007669"/>
    <property type="project" value="UniProtKB-UniRule"/>
</dbReference>
<dbReference type="FunFam" id="1.10.10.200:FF:000003">
    <property type="entry name" value="Probable transcriptional regulatory protein YeeN"/>
    <property type="match status" value="1"/>
</dbReference>
<dbReference type="Gene3D" id="1.10.10.200">
    <property type="match status" value="1"/>
</dbReference>
<dbReference type="Gene3D" id="3.30.70.980">
    <property type="match status" value="2"/>
</dbReference>
<dbReference type="HAMAP" id="MF_00693">
    <property type="entry name" value="Transcrip_reg_TACO1"/>
    <property type="match status" value="1"/>
</dbReference>
<dbReference type="InterPro" id="IPR017856">
    <property type="entry name" value="Integrase-like_N"/>
</dbReference>
<dbReference type="InterPro" id="IPR048300">
    <property type="entry name" value="TACO1_YebC-like_2nd/3rd_dom"/>
</dbReference>
<dbReference type="InterPro" id="IPR049083">
    <property type="entry name" value="TACO1_YebC_N"/>
</dbReference>
<dbReference type="InterPro" id="IPR002876">
    <property type="entry name" value="Transcrip_reg_TACO1-like"/>
</dbReference>
<dbReference type="InterPro" id="IPR026564">
    <property type="entry name" value="Transcrip_reg_TACO1-like_dom3"/>
</dbReference>
<dbReference type="InterPro" id="IPR029072">
    <property type="entry name" value="YebC-like"/>
</dbReference>
<dbReference type="NCBIfam" id="NF009044">
    <property type="entry name" value="PRK12378.1"/>
    <property type="match status" value="1"/>
</dbReference>
<dbReference type="PANTHER" id="PTHR12532">
    <property type="entry name" value="TRANSLATIONAL ACTIVATOR OF CYTOCHROME C OXIDASE 1"/>
    <property type="match status" value="1"/>
</dbReference>
<dbReference type="PANTHER" id="PTHR12532:SF0">
    <property type="entry name" value="TRANSLATIONAL ACTIVATOR OF CYTOCHROME C OXIDASE 1"/>
    <property type="match status" value="1"/>
</dbReference>
<dbReference type="Pfam" id="PF20772">
    <property type="entry name" value="TACO1_YebC_N"/>
    <property type="match status" value="1"/>
</dbReference>
<dbReference type="Pfam" id="PF01709">
    <property type="entry name" value="Transcrip_reg"/>
    <property type="match status" value="1"/>
</dbReference>
<dbReference type="SUPFAM" id="SSF75625">
    <property type="entry name" value="YebC-like"/>
    <property type="match status" value="1"/>
</dbReference>
<accession>Q0VNJ7</accession>
<protein>
    <recommendedName>
        <fullName evidence="1">Probable transcriptional regulatory protein ABO_1803</fullName>
    </recommendedName>
</protein>
<sequence length="239" mass="26535">MGRAYQNRKESMAKTSDMKAKVYSRYGREIYVSAKSGGVDPTANLALRSLIERAKKDQVPGHVIDKALDKAKGGGGEDYSPARYEGYGPGGSMALIECLTDNPNRTFGDVRMAFTKTKCKIGTQGTVSHMFDHVAIFVFAHEDEDAVLEALMDADVDVSEIENDNGMLTVFTPNTEYFKAKQALVEAFGELEFEVDEIQFIPQSYTTISAEDMDMFDKFMAMLNDLDDVQNVYHNVDLG</sequence>
<name>Y1803_ALCBS</name>